<keyword id="KW-0067">ATP-binding</keyword>
<keyword id="KW-0547">Nucleotide-binding</keyword>
<keyword id="KW-1185">Reference proteome</keyword>
<reference key="1">
    <citation type="journal article" date="2002" name="DNA Res.">
        <title>Biochemical examination of the potential eukaryotic-type protein kinase genes in the complete genome of the unicellular Cyanobacterium synechocystis sp. PCC 6803.</title>
        <authorList>
            <person name="Kamei A."/>
            <person name="Yuasa T."/>
            <person name="Geng X."/>
            <person name="Ikeuchi M."/>
        </authorList>
    </citation>
    <scope>NUCLEOTIDE SEQUENCE [GENOMIC DNA]</scope>
    <scope>LACK OF KINASE ACTIVITY</scope>
</reference>
<reference key="2">
    <citation type="journal article" date="1996" name="DNA Res.">
        <title>Sequence analysis of the genome of the unicellular cyanobacterium Synechocystis sp. strain PCC6803. II. Sequence determination of the entire genome and assignment of potential protein-coding regions.</title>
        <authorList>
            <person name="Kaneko T."/>
            <person name="Sato S."/>
            <person name="Kotani H."/>
            <person name="Tanaka A."/>
            <person name="Asamizu E."/>
            <person name="Nakamura Y."/>
            <person name="Miyajima N."/>
            <person name="Hirosawa M."/>
            <person name="Sugiura M."/>
            <person name="Sasamoto S."/>
            <person name="Kimura T."/>
            <person name="Hosouchi T."/>
            <person name="Matsuno A."/>
            <person name="Muraki A."/>
            <person name="Nakazaki N."/>
            <person name="Naruo K."/>
            <person name="Okumura S."/>
            <person name="Shimpo S."/>
            <person name="Takeuchi C."/>
            <person name="Wada T."/>
            <person name="Watanabe A."/>
            <person name="Yamada M."/>
            <person name="Yasuda M."/>
            <person name="Tabata S."/>
        </authorList>
    </citation>
    <scope>NUCLEOTIDE SEQUENCE [LARGE SCALE GENOMIC DNA]</scope>
    <source>
        <strain>ATCC 27184 / PCC 6803 / Kazusa</strain>
    </source>
</reference>
<protein>
    <recommendedName>
        <fullName>Serine/threonine-protein kinase-like protein E</fullName>
    </recommendedName>
</protein>
<evidence type="ECO:0000250" key="1"/>
<evidence type="ECO:0000255" key="2">
    <source>
        <dbReference type="PROSITE-ProRule" id="PRU00159"/>
    </source>
</evidence>
<evidence type="ECO:0000256" key="3">
    <source>
        <dbReference type="SAM" id="MobiDB-lite"/>
    </source>
</evidence>
<name>SPKE_SYNY3</name>
<comment type="function">
    <text>Lacks protein kinase activity.</text>
</comment>
<comment type="similarity">
    <text evidence="2">Belongs to the protein kinase superfamily. Ser/Thr protein kinase family.</text>
</comment>
<organism>
    <name type="scientific">Synechocystis sp. (strain ATCC 27184 / PCC 6803 / Kazusa)</name>
    <dbReference type="NCBI Taxonomy" id="1111708"/>
    <lineage>
        <taxon>Bacteria</taxon>
        <taxon>Bacillati</taxon>
        <taxon>Cyanobacteriota</taxon>
        <taxon>Cyanophyceae</taxon>
        <taxon>Synechococcales</taxon>
        <taxon>Merismopediaceae</taxon>
        <taxon>Synechocystis</taxon>
    </lineage>
</organism>
<sequence length="614" mass="68700">MTPSLSLGQRLDDRYLIQLHLGQNSLGQQYLAQDTHRFDEPCTITVLTAPPGDKAGNLFKQQAEILYALDHPQIANFREFFALGSELYLVQDFIEGQSYFDLLKDRRLQGKAFTELEVRQWCRQLLPVLHYLHIQKICHGQISPSSIMRRTVDGLPVLVDFTHSQYYSGTPGEDRRDLHGLGLGAIALLTGEVNPNPPWENLLSSVALSQEFRQLLLKLLAWPPLVDWPTLTDNLNNLPQHFLPTVAEFNLTSTIPEQTDNGVGKSSTGEPPFPTVHQSPESSSSAKVKNMVRVDGLKGLVKKSFILLGLMAIAMALGWGAGQLWLDNQQRAALEKLAQEEPGDDVPEKTDLEIKNEIRARRLNLGISPQRFQTLMDDGLAFQLGIDPQQRLEKNPNTNGAPLSLGSPEQQMAMTITVLDALESLSREATRDFAQNNSGDRRRWIPRVNQLRLSSRSFYDLVNARFHHYLPMVSPALLGEPEFEQRPLAQVWNAMAFDSLASLEDESHYQRLSFDDTNQLNLNGTLEPGEGYAYAVTIPPTEEFSLQLTAPPTARISFYPPTGPEVILQNSAMHRWSGPTDQAGYYELVITSVAEEPIAFELELSIIPASAQPF</sequence>
<dbReference type="EMBL" id="AB046602">
    <property type="protein sequence ID" value="BAB17038.1"/>
    <property type="molecule type" value="Genomic_DNA"/>
</dbReference>
<dbReference type="EMBL" id="BA000022">
    <property type="protein sequence ID" value="BAA17555.1"/>
    <property type="molecule type" value="Genomic_DNA"/>
</dbReference>
<dbReference type="PIR" id="S77221">
    <property type="entry name" value="S77221"/>
</dbReference>
<dbReference type="SMR" id="P73515"/>
<dbReference type="IntAct" id="P73515">
    <property type="interactions" value="4"/>
</dbReference>
<dbReference type="STRING" id="1148.gene:10498420"/>
<dbReference type="PaxDb" id="1148-1652635"/>
<dbReference type="EnsemblBacteria" id="BAA17555">
    <property type="protein sequence ID" value="BAA17555"/>
    <property type="gene ID" value="BAA17555"/>
</dbReference>
<dbReference type="KEGG" id="syn:slr1443"/>
<dbReference type="eggNOG" id="COG0515">
    <property type="taxonomic scope" value="Bacteria"/>
</dbReference>
<dbReference type="InParanoid" id="P73515"/>
<dbReference type="BRENDA" id="2.7.11.1">
    <property type="organism ID" value="382"/>
</dbReference>
<dbReference type="Proteomes" id="UP000001425">
    <property type="component" value="Chromosome"/>
</dbReference>
<dbReference type="GO" id="GO:0005524">
    <property type="term" value="F:ATP binding"/>
    <property type="evidence" value="ECO:0007669"/>
    <property type="project" value="UniProtKB-KW"/>
</dbReference>
<dbReference type="GO" id="GO:0004674">
    <property type="term" value="F:protein serine/threonine kinase activity"/>
    <property type="evidence" value="ECO:0000318"/>
    <property type="project" value="GO_Central"/>
</dbReference>
<dbReference type="Gene3D" id="3.30.200.20">
    <property type="entry name" value="Phosphorylase Kinase, domain 1"/>
    <property type="match status" value="1"/>
</dbReference>
<dbReference type="Gene3D" id="1.10.510.10">
    <property type="entry name" value="Transferase(Phosphotransferase) domain 1"/>
    <property type="match status" value="1"/>
</dbReference>
<dbReference type="InterPro" id="IPR011009">
    <property type="entry name" value="Kinase-like_dom_sf"/>
</dbReference>
<dbReference type="InterPro" id="IPR000719">
    <property type="entry name" value="Prot_kinase_dom"/>
</dbReference>
<dbReference type="PANTHER" id="PTHR24363">
    <property type="entry name" value="SERINE/THREONINE PROTEIN KINASE"/>
    <property type="match status" value="1"/>
</dbReference>
<dbReference type="PANTHER" id="PTHR24363:SF7">
    <property type="entry name" value="SERINE_THREONINE-PROTEIN KINASE-LIKE PROTEIN E"/>
    <property type="match status" value="1"/>
</dbReference>
<dbReference type="Pfam" id="PF00069">
    <property type="entry name" value="Pkinase"/>
    <property type="match status" value="1"/>
</dbReference>
<dbReference type="SMART" id="SM00220">
    <property type="entry name" value="S_TKc"/>
    <property type="match status" value="1"/>
</dbReference>
<dbReference type="SUPFAM" id="SSF56112">
    <property type="entry name" value="Protein kinase-like (PK-like)"/>
    <property type="match status" value="1"/>
</dbReference>
<dbReference type="PROSITE" id="PS50011">
    <property type="entry name" value="PROTEIN_KINASE_DOM"/>
    <property type="match status" value="1"/>
</dbReference>
<gene>
    <name type="primary">spkE</name>
    <name type="ordered locus">slr1443</name>
</gene>
<feature type="chain" id="PRO_0000171243" description="Serine/threonine-protein kinase-like protein E">
    <location>
        <begin position="1"/>
        <end position="614"/>
    </location>
</feature>
<feature type="domain" description="Protein kinase" evidence="2">
    <location>
        <begin position="15"/>
        <end position="404"/>
    </location>
</feature>
<feature type="region of interest" description="Disordered" evidence="3">
    <location>
        <begin position="256"/>
        <end position="284"/>
    </location>
</feature>
<feature type="compositionally biased region" description="Polar residues" evidence="3">
    <location>
        <begin position="256"/>
        <end position="269"/>
    </location>
</feature>
<feature type="binding site" evidence="2">
    <location>
        <begin position="21"/>
        <end position="29"/>
    </location>
    <ligand>
        <name>ATP</name>
        <dbReference type="ChEBI" id="CHEBI:30616"/>
    </ligand>
</feature>
<feature type="site" description="Defective ATP-binding" evidence="1">
    <location>
        <position position="44"/>
    </location>
</feature>
<proteinExistence type="inferred from homology"/>
<accession>P73515</accession>